<comment type="subcellular location">
    <subcellularLocation>
        <location evidence="2">Cell membrane</location>
        <topology evidence="2">Multi-pass membrane protein</topology>
    </subcellularLocation>
</comment>
<comment type="similarity">
    <text evidence="2">Belongs to the EutH family.</text>
</comment>
<accession>P54957</accession>
<name>YXER_BACSU</name>
<gene>
    <name type="primary">yxeR</name>
    <name type="synonym">LP6A</name>
    <name type="ordered locus">BSU39450</name>
</gene>
<sequence length="370" mass="38415">MTVNDAVVFILAAFLLWGAADYCLGNRWGLGERFADGFKAMGPLALSMIGIVSLAPVLAAILIPIVAPFYTAIGADPSSFANTILAIDMGGYALAGEMAKDPQAGLFSWVFLGTMMGPAIVFTIPVALGIIEKEDHPYFAKGILIGLCTVPIGCLIGGLCAGFDIGMIGKNLLIPSLLSAVIAFGLWRYTDRMIQLFHLFGKAVSMVAIIGLAAVSVETMTGIVLIPGMENVETGIQTTGTIAIALAGAFPMTAFITKTFKKPLQALGKCLHLDETATAGLVTSLAHHIPMLASLKDMTPRGKVINVAFAVSGAFVLGSHLGFVAGMKKEMAAAMIIGKLAGGVTAAAAAAWMTPAQSAKQQKRISASHS</sequence>
<proteinExistence type="inferred from homology"/>
<reference key="1">
    <citation type="journal article" date="1995" name="DNA Res.">
        <title>Cloning and sequencing of a 23-kb region of the Bacillus subtilis genome between the iol and hut operons.</title>
        <authorList>
            <person name="Yoshida K."/>
            <person name="Fujimyra M."/>
            <person name="Yanai N."/>
            <person name="Fujita Y."/>
        </authorList>
    </citation>
    <scope>NUCLEOTIDE SEQUENCE [GENOMIC DNA]</scope>
    <source>
        <strain>168 / BGSC1A1</strain>
    </source>
</reference>
<reference key="2">
    <citation type="journal article" date="1997" name="Nature">
        <title>The complete genome sequence of the Gram-positive bacterium Bacillus subtilis.</title>
        <authorList>
            <person name="Kunst F."/>
            <person name="Ogasawara N."/>
            <person name="Moszer I."/>
            <person name="Albertini A.M."/>
            <person name="Alloni G."/>
            <person name="Azevedo V."/>
            <person name="Bertero M.G."/>
            <person name="Bessieres P."/>
            <person name="Bolotin A."/>
            <person name="Borchert S."/>
            <person name="Borriss R."/>
            <person name="Boursier L."/>
            <person name="Brans A."/>
            <person name="Braun M."/>
            <person name="Brignell S.C."/>
            <person name="Bron S."/>
            <person name="Brouillet S."/>
            <person name="Bruschi C.V."/>
            <person name="Caldwell B."/>
            <person name="Capuano V."/>
            <person name="Carter N.M."/>
            <person name="Choi S.-K."/>
            <person name="Codani J.-J."/>
            <person name="Connerton I.F."/>
            <person name="Cummings N.J."/>
            <person name="Daniel R.A."/>
            <person name="Denizot F."/>
            <person name="Devine K.M."/>
            <person name="Duesterhoeft A."/>
            <person name="Ehrlich S.D."/>
            <person name="Emmerson P.T."/>
            <person name="Entian K.-D."/>
            <person name="Errington J."/>
            <person name="Fabret C."/>
            <person name="Ferrari E."/>
            <person name="Foulger D."/>
            <person name="Fritz C."/>
            <person name="Fujita M."/>
            <person name="Fujita Y."/>
            <person name="Fuma S."/>
            <person name="Galizzi A."/>
            <person name="Galleron N."/>
            <person name="Ghim S.-Y."/>
            <person name="Glaser P."/>
            <person name="Goffeau A."/>
            <person name="Golightly E.J."/>
            <person name="Grandi G."/>
            <person name="Guiseppi G."/>
            <person name="Guy B.J."/>
            <person name="Haga K."/>
            <person name="Haiech J."/>
            <person name="Harwood C.R."/>
            <person name="Henaut A."/>
            <person name="Hilbert H."/>
            <person name="Holsappel S."/>
            <person name="Hosono S."/>
            <person name="Hullo M.-F."/>
            <person name="Itaya M."/>
            <person name="Jones L.-M."/>
            <person name="Joris B."/>
            <person name="Karamata D."/>
            <person name="Kasahara Y."/>
            <person name="Klaerr-Blanchard M."/>
            <person name="Klein C."/>
            <person name="Kobayashi Y."/>
            <person name="Koetter P."/>
            <person name="Koningstein G."/>
            <person name="Krogh S."/>
            <person name="Kumano M."/>
            <person name="Kurita K."/>
            <person name="Lapidus A."/>
            <person name="Lardinois S."/>
            <person name="Lauber J."/>
            <person name="Lazarevic V."/>
            <person name="Lee S.-M."/>
            <person name="Levine A."/>
            <person name="Liu H."/>
            <person name="Masuda S."/>
            <person name="Mauel C."/>
            <person name="Medigue C."/>
            <person name="Medina N."/>
            <person name="Mellado R.P."/>
            <person name="Mizuno M."/>
            <person name="Moestl D."/>
            <person name="Nakai S."/>
            <person name="Noback M."/>
            <person name="Noone D."/>
            <person name="O'Reilly M."/>
            <person name="Ogawa K."/>
            <person name="Ogiwara A."/>
            <person name="Oudega B."/>
            <person name="Park S.-H."/>
            <person name="Parro V."/>
            <person name="Pohl T.M."/>
            <person name="Portetelle D."/>
            <person name="Porwollik S."/>
            <person name="Prescott A.M."/>
            <person name="Presecan E."/>
            <person name="Pujic P."/>
            <person name="Purnelle B."/>
            <person name="Rapoport G."/>
            <person name="Rey M."/>
            <person name="Reynolds S."/>
            <person name="Rieger M."/>
            <person name="Rivolta C."/>
            <person name="Rocha E."/>
            <person name="Roche B."/>
            <person name="Rose M."/>
            <person name="Sadaie Y."/>
            <person name="Sato T."/>
            <person name="Scanlan E."/>
            <person name="Schleich S."/>
            <person name="Schroeter R."/>
            <person name="Scoffone F."/>
            <person name="Sekiguchi J."/>
            <person name="Sekowska A."/>
            <person name="Seror S.J."/>
            <person name="Serror P."/>
            <person name="Shin B.-S."/>
            <person name="Soldo B."/>
            <person name="Sorokin A."/>
            <person name="Tacconi E."/>
            <person name="Takagi T."/>
            <person name="Takahashi H."/>
            <person name="Takemaru K."/>
            <person name="Takeuchi M."/>
            <person name="Tamakoshi A."/>
            <person name="Tanaka T."/>
            <person name="Terpstra P."/>
            <person name="Tognoni A."/>
            <person name="Tosato V."/>
            <person name="Uchiyama S."/>
            <person name="Vandenbol M."/>
            <person name="Vannier F."/>
            <person name="Vassarotti A."/>
            <person name="Viari A."/>
            <person name="Wambutt R."/>
            <person name="Wedler E."/>
            <person name="Wedler H."/>
            <person name="Weitzenegger T."/>
            <person name="Winters P."/>
            <person name="Wipat A."/>
            <person name="Yamamoto H."/>
            <person name="Yamane K."/>
            <person name="Yasumoto K."/>
            <person name="Yata K."/>
            <person name="Yoshida K."/>
            <person name="Yoshikawa H.-F."/>
            <person name="Zumstein E."/>
            <person name="Yoshikawa H."/>
            <person name="Danchin A."/>
        </authorList>
    </citation>
    <scope>NUCLEOTIDE SEQUENCE [LARGE SCALE GENOMIC DNA]</scope>
    <source>
        <strain>168</strain>
    </source>
</reference>
<evidence type="ECO:0000255" key="1"/>
<evidence type="ECO:0000305" key="2"/>
<protein>
    <recommendedName>
        <fullName>Uncharacterized protein YxeR</fullName>
    </recommendedName>
</protein>
<organism>
    <name type="scientific">Bacillus subtilis (strain 168)</name>
    <dbReference type="NCBI Taxonomy" id="224308"/>
    <lineage>
        <taxon>Bacteria</taxon>
        <taxon>Bacillati</taxon>
        <taxon>Bacillota</taxon>
        <taxon>Bacilli</taxon>
        <taxon>Bacillales</taxon>
        <taxon>Bacillaceae</taxon>
        <taxon>Bacillus</taxon>
    </lineage>
</organism>
<dbReference type="EMBL" id="D45912">
    <property type="protein sequence ID" value="BAA08334.1"/>
    <property type="molecule type" value="Genomic_DNA"/>
</dbReference>
<dbReference type="EMBL" id="AL009126">
    <property type="protein sequence ID" value="CAB15981.1"/>
    <property type="molecule type" value="Genomic_DNA"/>
</dbReference>
<dbReference type="PIR" id="D70076">
    <property type="entry name" value="D70076"/>
</dbReference>
<dbReference type="RefSeq" id="NP_391824.1">
    <property type="nucleotide sequence ID" value="NC_000964.3"/>
</dbReference>
<dbReference type="FunCoup" id="P54957">
    <property type="interactions" value="81"/>
</dbReference>
<dbReference type="STRING" id="224308.BSU39450"/>
<dbReference type="PaxDb" id="224308-BSU39450"/>
<dbReference type="EnsemblBacteria" id="CAB15981">
    <property type="protein sequence ID" value="CAB15981"/>
    <property type="gene ID" value="BSU_39450"/>
</dbReference>
<dbReference type="GeneID" id="937551"/>
<dbReference type="KEGG" id="bsu:BSU39450"/>
<dbReference type="PATRIC" id="fig|224308.179.peg.4270"/>
<dbReference type="eggNOG" id="COG3192">
    <property type="taxonomic scope" value="Bacteria"/>
</dbReference>
<dbReference type="InParanoid" id="P54957"/>
<dbReference type="OrthoDB" id="9778282at2"/>
<dbReference type="PhylomeDB" id="P54957"/>
<dbReference type="BioCyc" id="BSUB:BSU39450-MONOMER"/>
<dbReference type="Proteomes" id="UP000001570">
    <property type="component" value="Chromosome"/>
</dbReference>
<dbReference type="GO" id="GO:0005886">
    <property type="term" value="C:plasma membrane"/>
    <property type="evidence" value="ECO:0000318"/>
    <property type="project" value="GO_Central"/>
</dbReference>
<dbReference type="GO" id="GO:0034228">
    <property type="term" value="F:ethanolamine transmembrane transporter activity"/>
    <property type="evidence" value="ECO:0007669"/>
    <property type="project" value="InterPro"/>
</dbReference>
<dbReference type="InterPro" id="IPR007441">
    <property type="entry name" value="EutH"/>
</dbReference>
<dbReference type="NCBIfam" id="NF011666">
    <property type="entry name" value="PRK15086.1-2"/>
    <property type="match status" value="1"/>
</dbReference>
<dbReference type="NCBIfam" id="NF011667">
    <property type="entry name" value="PRK15086.1-3"/>
    <property type="match status" value="1"/>
</dbReference>
<dbReference type="PANTHER" id="PTHR40089:SF1">
    <property type="entry name" value="ETHANOLAMINE PERMEASE EUTH-RELATED"/>
    <property type="match status" value="1"/>
</dbReference>
<dbReference type="PANTHER" id="PTHR40089">
    <property type="entry name" value="ETHANOLAMINE UTILIZATION PROTEIN EUTH"/>
    <property type="match status" value="1"/>
</dbReference>
<dbReference type="Pfam" id="PF04346">
    <property type="entry name" value="EutH"/>
    <property type="match status" value="1"/>
</dbReference>
<dbReference type="PIRSF" id="PIRSF019466">
    <property type="entry name" value="EutH"/>
    <property type="match status" value="1"/>
</dbReference>
<feature type="chain" id="PRO_0000050020" description="Uncharacterized protein YxeR">
    <location>
        <begin position="1"/>
        <end position="370"/>
    </location>
</feature>
<feature type="transmembrane region" description="Helical" evidence="1">
    <location>
        <begin position="6"/>
        <end position="26"/>
    </location>
</feature>
<feature type="transmembrane region" description="Helical" evidence="1">
    <location>
        <begin position="49"/>
        <end position="69"/>
    </location>
</feature>
<feature type="transmembrane region" description="Helical" evidence="1">
    <location>
        <begin position="79"/>
        <end position="99"/>
    </location>
</feature>
<feature type="transmembrane region" description="Helical" evidence="1">
    <location>
        <begin position="111"/>
        <end position="131"/>
    </location>
</feature>
<feature type="transmembrane region" description="Helical" evidence="1">
    <location>
        <begin position="143"/>
        <end position="163"/>
    </location>
</feature>
<feature type="transmembrane region" description="Helical" evidence="1">
    <location>
        <begin position="167"/>
        <end position="187"/>
    </location>
</feature>
<feature type="transmembrane region" description="Helical" evidence="1">
    <location>
        <begin position="206"/>
        <end position="226"/>
    </location>
</feature>
<feature type="transmembrane region" description="Helical" evidence="1">
    <location>
        <begin position="236"/>
        <end position="256"/>
    </location>
</feature>
<feature type="transmembrane region" description="Helical" evidence="1">
    <location>
        <begin position="307"/>
        <end position="327"/>
    </location>
</feature>
<feature type="transmembrane region" description="Helical" evidence="1">
    <location>
        <begin position="333"/>
        <end position="353"/>
    </location>
</feature>
<keyword id="KW-1003">Cell membrane</keyword>
<keyword id="KW-0472">Membrane</keyword>
<keyword id="KW-1185">Reference proteome</keyword>
<keyword id="KW-0812">Transmembrane</keyword>
<keyword id="KW-1133">Transmembrane helix</keyword>
<keyword id="KW-0813">Transport</keyword>